<proteinExistence type="evidence at protein level"/>
<feature type="chain" id="PRO_0000421356" description="Squalene methyltransferase 2">
    <location>
        <begin position="1"/>
        <end position="378"/>
    </location>
</feature>
<feature type="transmembrane region" description="Helical" evidence="1">
    <location>
        <begin position="17"/>
        <end position="37"/>
    </location>
</feature>
<comment type="function">
    <text evidence="3">Converts squalene to mono- and dimethyl derivatives, but not to tri- and tetramethylated products. Unable to methylate cycloartenol, zymosterol or lanosterol. Methylates both C-3 and C22 positions, but only C-3 position in monomethylated products. Produces mainly monomethylated squalene and only 20% of dimethylated squalene.</text>
</comment>
<comment type="catalytic activity">
    <reaction evidence="3">
        <text>squalene + 2 S-adenosyl-L-methionine = 3,22-dimethyl-1,2,23,24-tetradehydro-2,3,22,23-tetrahydrosqualene + 2 S-adenosyl-L-homocysteine + 2 H(+)</text>
        <dbReference type="Rhea" id="RHEA:34643"/>
        <dbReference type="ChEBI" id="CHEBI:15378"/>
        <dbReference type="ChEBI" id="CHEBI:15440"/>
        <dbReference type="ChEBI" id="CHEBI:57856"/>
        <dbReference type="ChEBI" id="CHEBI:59789"/>
        <dbReference type="ChEBI" id="CHEBI:70861"/>
        <dbReference type="EC" id="2.1.1.262"/>
    </reaction>
</comment>
<comment type="biophysicochemical properties">
    <kinetics>
        <KM evidence="3">22.5 uM for squalene</KM>
    </kinetics>
</comment>
<comment type="subcellular location">
    <subcellularLocation>
        <location evidence="4">Microsome membrane</location>
        <topology evidence="4">Single-pass membrane protein</topology>
    </subcellularLocation>
</comment>
<comment type="similarity">
    <text evidence="2">Belongs to the class I-like SAM-binding methyltransferase superfamily. Erg6/SMT family.</text>
</comment>
<gene>
    <name type="primary">TMT-2</name>
</gene>
<keyword id="KW-0256">Endoplasmic reticulum</keyword>
<keyword id="KW-0444">Lipid biosynthesis</keyword>
<keyword id="KW-0443">Lipid metabolism</keyword>
<keyword id="KW-0472">Membrane</keyword>
<keyword id="KW-0489">Methyltransferase</keyword>
<keyword id="KW-0492">Microsome</keyword>
<keyword id="KW-0949">S-adenosyl-L-methionine</keyword>
<keyword id="KW-0808">Transferase</keyword>
<keyword id="KW-0812">Transmembrane</keyword>
<keyword id="KW-1133">Transmembrane helix</keyword>
<accession>H2E7T6</accession>
<name>SQMT2_BOTBR</name>
<protein>
    <recommendedName>
        <fullName>Squalene methyltransferase 2</fullName>
        <ecNumber>2.1.1.262</ecNumber>
    </recommendedName>
    <alternativeName>
        <fullName>Triterpene methyltransferase 2</fullName>
    </alternativeName>
</protein>
<reference key="1">
    <citation type="journal article" date="2012" name="J. Biol. Chem.">
        <title>Functional identification of triterpene methyltransferases from Botryococcus braunii race B.</title>
        <authorList>
            <person name="Niehaus T.D."/>
            <person name="Kinison S."/>
            <person name="Okada S."/>
            <person name="Yeo Y.S."/>
            <person name="Bell S.A."/>
            <person name="Cui P."/>
            <person name="Devarenne T.P."/>
            <person name="Chappell J."/>
        </authorList>
    </citation>
    <scope>NUCLEOTIDE SEQUENCE [MRNA]</scope>
    <scope>FUNCTION</scope>
    <scope>CATALYTIC ACTIVITY</scope>
    <scope>BIOPHYSICOCHEMICAL PROPERTIES</scope>
</reference>
<dbReference type="EC" id="2.1.1.262"/>
<dbReference type="EMBL" id="JN828963">
    <property type="protein sequence ID" value="AEY68257.1"/>
    <property type="molecule type" value="mRNA"/>
</dbReference>
<dbReference type="SMR" id="H2E7T6"/>
<dbReference type="KEGG" id="ag:AEY68257"/>
<dbReference type="BioCyc" id="MetaCyc:MONOMER-17323"/>
<dbReference type="SABIO-RK" id="H2E7T6"/>
<dbReference type="GO" id="GO:0005783">
    <property type="term" value="C:endoplasmic reticulum"/>
    <property type="evidence" value="ECO:0007669"/>
    <property type="project" value="UniProtKB-KW"/>
</dbReference>
<dbReference type="GO" id="GO:0016020">
    <property type="term" value="C:membrane"/>
    <property type="evidence" value="ECO:0007669"/>
    <property type="project" value="UniProtKB-KW"/>
</dbReference>
<dbReference type="GO" id="GO:0008757">
    <property type="term" value="F:S-adenosylmethionine-dependent methyltransferase activity"/>
    <property type="evidence" value="ECO:0007669"/>
    <property type="project" value="InterPro"/>
</dbReference>
<dbReference type="GO" id="GO:0032259">
    <property type="term" value="P:methylation"/>
    <property type="evidence" value="ECO:0007669"/>
    <property type="project" value="UniProtKB-KW"/>
</dbReference>
<dbReference type="GO" id="GO:0006694">
    <property type="term" value="P:steroid biosynthetic process"/>
    <property type="evidence" value="ECO:0007669"/>
    <property type="project" value="InterPro"/>
</dbReference>
<dbReference type="CDD" id="cd02440">
    <property type="entry name" value="AdoMet_MTases"/>
    <property type="match status" value="1"/>
</dbReference>
<dbReference type="Gene3D" id="3.40.50.150">
    <property type="entry name" value="Vaccinia Virus protein VP39"/>
    <property type="match status" value="1"/>
</dbReference>
<dbReference type="InterPro" id="IPR013216">
    <property type="entry name" value="Methyltransf_11"/>
</dbReference>
<dbReference type="InterPro" id="IPR030384">
    <property type="entry name" value="MeTrfase_SMT"/>
</dbReference>
<dbReference type="InterPro" id="IPR029063">
    <property type="entry name" value="SAM-dependent_MTases_sf"/>
</dbReference>
<dbReference type="InterPro" id="IPR013705">
    <property type="entry name" value="Sterol_MeTrfase_C"/>
</dbReference>
<dbReference type="PANTHER" id="PTHR44742">
    <property type="match status" value="1"/>
</dbReference>
<dbReference type="PANTHER" id="PTHR44742:SF2">
    <property type="entry name" value="24-METHYLENESTEROL C-METHYLTRANSFERASE 2"/>
    <property type="match status" value="1"/>
</dbReference>
<dbReference type="Pfam" id="PF08241">
    <property type="entry name" value="Methyltransf_11"/>
    <property type="match status" value="1"/>
</dbReference>
<dbReference type="Pfam" id="PF08498">
    <property type="entry name" value="Sterol_MT_C"/>
    <property type="match status" value="1"/>
</dbReference>
<dbReference type="SUPFAM" id="SSF53335">
    <property type="entry name" value="S-adenosyl-L-methionine-dependent methyltransferases"/>
    <property type="match status" value="1"/>
</dbReference>
<dbReference type="PROSITE" id="PS51685">
    <property type="entry name" value="SAM_MT_ERG6_SMT"/>
    <property type="match status" value="1"/>
</dbReference>
<organism>
    <name type="scientific">Botryococcus braunii</name>
    <name type="common">Green alga</name>
    <dbReference type="NCBI Taxonomy" id="38881"/>
    <lineage>
        <taxon>Eukaryota</taxon>
        <taxon>Viridiplantae</taxon>
        <taxon>Chlorophyta</taxon>
        <taxon>core chlorophytes</taxon>
        <taxon>Trebouxiophyceae</taxon>
        <taxon>Trebouxiophyceae incertae sedis</taxon>
        <taxon>Elliptochloris clade</taxon>
        <taxon>Botryococcus</taxon>
    </lineage>
</organism>
<sequence length="378" mass="41581">MAVDLLSIYGPGLFESLLTVKGATGLIAALILGYIIITRLPGQKTKPKLLDLTAGGIPFEKVGEVFNDYDKSYGKGTHGELHVQDTNKVFQLANTFYDFVTDGYEWAWGSSFHFSQRMPGLSHAASQMLHESRMASYLRLKPGMTCLDVGCGVGNPGRTVAACSGAVVTGITINKYQIQRAEYHNRRTGLVGFFKPTVGNFCNMPFDAKSFDAAFAMDATCHAPKLEDVYGEVFRVLKPGGFFATYEWVSTKNYDPTNTRHVKVMNSIIFGNGLPNIRSWKQAEEAGENVGFKLLTSFDLATAPPVGKPWYYVPELMVKYGLLKIQKALVRGACSLGLLPDQSWKVCNMVADMVPNLVEGGATDIFTPMHLLIFQKPE</sequence>
<evidence type="ECO:0000255" key="1"/>
<evidence type="ECO:0000255" key="2">
    <source>
        <dbReference type="PROSITE-ProRule" id="PRU01022"/>
    </source>
</evidence>
<evidence type="ECO:0000269" key="3">
    <source>
    </source>
</evidence>
<evidence type="ECO:0000305" key="4"/>